<accession>Q2J2H6</accession>
<gene>
    <name evidence="1" type="primary">dut</name>
    <name type="ordered locus">RPB_0623</name>
</gene>
<protein>
    <recommendedName>
        <fullName evidence="1">Deoxyuridine 5'-triphosphate nucleotidohydrolase</fullName>
        <shortName evidence="1">dUTPase</shortName>
        <ecNumber evidence="1">3.6.1.23</ecNumber>
    </recommendedName>
    <alternativeName>
        <fullName evidence="1">dUTP pyrophosphatase</fullName>
    </alternativeName>
</protein>
<sequence>MSPAIAVEIKRLPHAEGLPLPAYQSAHAAGLDLCAANSADAPLSLAPGCHMLVPTGLCIALPPNYEAQVRPRSGLAAKHGVTVLNAPGTIDADYRGEIGVLLINHGKEPFTIRRGERIAQMIIAPVVRAELISVETLSETARGVGGFGSTGR</sequence>
<reference key="1">
    <citation type="submission" date="2006-01" db="EMBL/GenBank/DDBJ databases">
        <title>Complete sequence of Rhodopseudomonas palustris HaA2.</title>
        <authorList>
            <consortium name="US DOE Joint Genome Institute"/>
            <person name="Copeland A."/>
            <person name="Lucas S."/>
            <person name="Lapidus A."/>
            <person name="Barry K."/>
            <person name="Detter J.C."/>
            <person name="Glavina T."/>
            <person name="Hammon N."/>
            <person name="Israni S."/>
            <person name="Pitluck S."/>
            <person name="Chain P."/>
            <person name="Malfatti S."/>
            <person name="Shin M."/>
            <person name="Vergez L."/>
            <person name="Schmutz J."/>
            <person name="Larimer F."/>
            <person name="Land M."/>
            <person name="Hauser L."/>
            <person name="Pelletier D.A."/>
            <person name="Kyrpides N."/>
            <person name="Anderson I."/>
            <person name="Oda Y."/>
            <person name="Harwood C.S."/>
            <person name="Richardson P."/>
        </authorList>
    </citation>
    <scope>NUCLEOTIDE SEQUENCE [LARGE SCALE GENOMIC DNA]</scope>
    <source>
        <strain>HaA2</strain>
    </source>
</reference>
<name>DUT_RHOP2</name>
<organism>
    <name type="scientific">Rhodopseudomonas palustris (strain HaA2)</name>
    <dbReference type="NCBI Taxonomy" id="316058"/>
    <lineage>
        <taxon>Bacteria</taxon>
        <taxon>Pseudomonadati</taxon>
        <taxon>Pseudomonadota</taxon>
        <taxon>Alphaproteobacteria</taxon>
        <taxon>Hyphomicrobiales</taxon>
        <taxon>Nitrobacteraceae</taxon>
        <taxon>Rhodopseudomonas</taxon>
    </lineage>
</organism>
<dbReference type="EC" id="3.6.1.23" evidence="1"/>
<dbReference type="EMBL" id="CP000250">
    <property type="protein sequence ID" value="ABD05334.1"/>
    <property type="molecule type" value="Genomic_DNA"/>
</dbReference>
<dbReference type="RefSeq" id="WP_011439524.1">
    <property type="nucleotide sequence ID" value="NC_007778.1"/>
</dbReference>
<dbReference type="SMR" id="Q2J2H6"/>
<dbReference type="STRING" id="316058.RPB_0623"/>
<dbReference type="KEGG" id="rpb:RPB_0623"/>
<dbReference type="eggNOG" id="COG0756">
    <property type="taxonomic scope" value="Bacteria"/>
</dbReference>
<dbReference type="HOGENOM" id="CLU_068508_1_2_5"/>
<dbReference type="OrthoDB" id="9809956at2"/>
<dbReference type="UniPathway" id="UPA00610">
    <property type="reaction ID" value="UER00666"/>
</dbReference>
<dbReference type="Proteomes" id="UP000008809">
    <property type="component" value="Chromosome"/>
</dbReference>
<dbReference type="GO" id="GO:0004170">
    <property type="term" value="F:dUTP diphosphatase activity"/>
    <property type="evidence" value="ECO:0007669"/>
    <property type="project" value="UniProtKB-UniRule"/>
</dbReference>
<dbReference type="GO" id="GO:0000287">
    <property type="term" value="F:magnesium ion binding"/>
    <property type="evidence" value="ECO:0007669"/>
    <property type="project" value="UniProtKB-UniRule"/>
</dbReference>
<dbReference type="GO" id="GO:0006226">
    <property type="term" value="P:dUMP biosynthetic process"/>
    <property type="evidence" value="ECO:0007669"/>
    <property type="project" value="UniProtKB-UniRule"/>
</dbReference>
<dbReference type="GO" id="GO:0046081">
    <property type="term" value="P:dUTP catabolic process"/>
    <property type="evidence" value="ECO:0007669"/>
    <property type="project" value="InterPro"/>
</dbReference>
<dbReference type="CDD" id="cd07557">
    <property type="entry name" value="trimeric_dUTPase"/>
    <property type="match status" value="1"/>
</dbReference>
<dbReference type="FunFam" id="2.70.40.10:FF:000002">
    <property type="entry name" value="dUTP diphosphatase"/>
    <property type="match status" value="1"/>
</dbReference>
<dbReference type="Gene3D" id="2.70.40.10">
    <property type="match status" value="1"/>
</dbReference>
<dbReference type="HAMAP" id="MF_00116">
    <property type="entry name" value="dUTPase_bact"/>
    <property type="match status" value="1"/>
</dbReference>
<dbReference type="InterPro" id="IPR008181">
    <property type="entry name" value="dUTPase"/>
</dbReference>
<dbReference type="InterPro" id="IPR029054">
    <property type="entry name" value="dUTPase-like"/>
</dbReference>
<dbReference type="InterPro" id="IPR036157">
    <property type="entry name" value="dUTPase-like_sf"/>
</dbReference>
<dbReference type="InterPro" id="IPR033704">
    <property type="entry name" value="dUTPase_trimeric"/>
</dbReference>
<dbReference type="NCBIfam" id="TIGR00576">
    <property type="entry name" value="dut"/>
    <property type="match status" value="1"/>
</dbReference>
<dbReference type="NCBIfam" id="NF001862">
    <property type="entry name" value="PRK00601.1"/>
    <property type="match status" value="1"/>
</dbReference>
<dbReference type="PANTHER" id="PTHR11241">
    <property type="entry name" value="DEOXYURIDINE 5'-TRIPHOSPHATE NUCLEOTIDOHYDROLASE"/>
    <property type="match status" value="1"/>
</dbReference>
<dbReference type="PANTHER" id="PTHR11241:SF0">
    <property type="entry name" value="DEOXYURIDINE 5'-TRIPHOSPHATE NUCLEOTIDOHYDROLASE"/>
    <property type="match status" value="1"/>
</dbReference>
<dbReference type="Pfam" id="PF00692">
    <property type="entry name" value="dUTPase"/>
    <property type="match status" value="1"/>
</dbReference>
<dbReference type="SUPFAM" id="SSF51283">
    <property type="entry name" value="dUTPase-like"/>
    <property type="match status" value="1"/>
</dbReference>
<proteinExistence type="inferred from homology"/>
<keyword id="KW-0378">Hydrolase</keyword>
<keyword id="KW-0460">Magnesium</keyword>
<keyword id="KW-0479">Metal-binding</keyword>
<keyword id="KW-0546">Nucleotide metabolism</keyword>
<keyword id="KW-1185">Reference proteome</keyword>
<feature type="chain" id="PRO_1000015503" description="Deoxyuridine 5'-triphosphate nucleotidohydrolase">
    <location>
        <begin position="1"/>
        <end position="152"/>
    </location>
</feature>
<feature type="binding site" evidence="1">
    <location>
        <begin position="72"/>
        <end position="74"/>
    </location>
    <ligand>
        <name>substrate</name>
    </ligand>
</feature>
<feature type="binding site" evidence="1">
    <location>
        <position position="85"/>
    </location>
    <ligand>
        <name>substrate</name>
    </ligand>
</feature>
<feature type="binding site" evidence="1">
    <location>
        <begin position="89"/>
        <end position="91"/>
    </location>
    <ligand>
        <name>substrate</name>
    </ligand>
</feature>
<comment type="function">
    <text evidence="1">This enzyme is involved in nucleotide metabolism: it produces dUMP, the immediate precursor of thymidine nucleotides and it decreases the intracellular concentration of dUTP so that uracil cannot be incorporated into DNA.</text>
</comment>
<comment type="catalytic activity">
    <reaction evidence="1">
        <text>dUTP + H2O = dUMP + diphosphate + H(+)</text>
        <dbReference type="Rhea" id="RHEA:10248"/>
        <dbReference type="ChEBI" id="CHEBI:15377"/>
        <dbReference type="ChEBI" id="CHEBI:15378"/>
        <dbReference type="ChEBI" id="CHEBI:33019"/>
        <dbReference type="ChEBI" id="CHEBI:61555"/>
        <dbReference type="ChEBI" id="CHEBI:246422"/>
        <dbReference type="EC" id="3.6.1.23"/>
    </reaction>
</comment>
<comment type="cofactor">
    <cofactor evidence="1">
        <name>Mg(2+)</name>
        <dbReference type="ChEBI" id="CHEBI:18420"/>
    </cofactor>
</comment>
<comment type="pathway">
    <text evidence="1">Pyrimidine metabolism; dUMP biosynthesis; dUMP from dCTP (dUTP route): step 2/2.</text>
</comment>
<comment type="similarity">
    <text evidence="1">Belongs to the dUTPase family.</text>
</comment>
<evidence type="ECO:0000255" key="1">
    <source>
        <dbReference type="HAMAP-Rule" id="MF_00116"/>
    </source>
</evidence>